<keyword id="KW-0002">3D-structure</keyword>
<keyword id="KW-0106">Calcium</keyword>
<keyword id="KW-0903">Direct protein sequencing</keyword>
<keyword id="KW-0325">Glycoprotein</keyword>
<keyword id="KW-0430">Lectin</keyword>
<keyword id="KW-0464">Manganese</keyword>
<keyword id="KW-0465">Mannose-binding</keyword>
<keyword id="KW-0479">Metal-binding</keyword>
<keyword id="KW-0800">Toxin</keyword>
<sequence length="245" mass="27063">SDSLSFSFINFDQDERNVIAQGDARLSGNNILQLTRTDSDGTPVRSTVGRILYSAQVRLWEKSTNRVANFQTQFSFFLESPLSNPADGIAFFIAPPDTAIPSGSAGGLLGLFSPKTAQNESANQVLAVEFDTFYAQNSNTWDPNYPHIGIDVNSIKSAKTVRWERREGVTLNVLVTYNPSTKTLDVVATYPDGQRYDLSVVVDVTTVLPEWVRVGFSAASGEQFQTHNLESWSFTSTLLYTAQKE</sequence>
<protein>
    <recommendedName>
        <fullName evidence="3 4">Mannose/glucose-specific lectin</fullName>
        <shortName evidence="3 4">CTL</shortName>
    </recommendedName>
</protein>
<comment type="function">
    <text evidence="1 2">Mannose/glucose-specific lectin that also binds derivatives N-acetyl-D-glucosamine and alpha-methyl-D-mannopyranoside with even higher affinity (PubMed:26946944, Ref.2). Has hemagglutinating activity towards rabbit erythrocytes (Ref.2). Is toxic towards brine shrimp A.nauplii (Ref.2). In rats, induces dose-dependent paw edema (PubMed:26946944).</text>
</comment>
<comment type="biophysicochemical properties">
    <phDependence>
        <text evidence="2">Optimum pH is 6-7 for hemagglutinating activity. Activity drops rapidly at lower or higher pH.</text>
    </phDependence>
    <temperatureDependence>
        <text evidence="2">Thermostable. Retains hemagglutinating activity after incubation at 70 degrees Celsius for 1 hour. At higher temperatures activity drops drastically and is lost at 100 degrees Celsius.</text>
    </temperatureDependence>
</comment>
<comment type="subunit">
    <text evidence="1">Homodimer.</text>
</comment>
<comment type="mass spectrometry" mass="27452.0" error="2.0" method="Electrospray" evidence="2"/>
<comment type="toxic dose">
    <text evidence="2">LD(50) is 33.56 ug/ml against A.nauplii.</text>
</comment>
<comment type="miscellaneous">
    <text evidence="2">Hemagglutinating activity is not inhibited by D-arabinose, D-fructose, D-fucose, D-galactose, D-xylose, alpha-methyl-D-glactopyranoside, carrageenan, lactose or mucin.</text>
</comment>
<comment type="similarity">
    <text evidence="5">Belongs to the leguminous lectin family.</text>
</comment>
<evidence type="ECO:0000269" key="1">
    <source>
    </source>
</evidence>
<evidence type="ECO:0000269" key="2">
    <source ref="2"/>
</evidence>
<evidence type="ECO:0000303" key="3">
    <source>
    </source>
</evidence>
<evidence type="ECO:0000303" key="4">
    <source ref="2"/>
</evidence>
<evidence type="ECO:0000305" key="5"/>
<evidence type="ECO:0007829" key="6">
    <source>
        <dbReference type="PDB" id="5EYY"/>
    </source>
</evidence>
<dbReference type="PDB" id="5EYX">
    <property type="method" value="X-ray"/>
    <property type="resolution" value="2.25 A"/>
    <property type="chains" value="A/B=1-245"/>
</dbReference>
<dbReference type="PDB" id="5EYY">
    <property type="method" value="X-ray"/>
    <property type="resolution" value="1.90 A"/>
    <property type="chains" value="A/B=1-245"/>
</dbReference>
<dbReference type="PDBsum" id="5EYX"/>
<dbReference type="PDBsum" id="5EYY"/>
<dbReference type="SMR" id="C0HJX1"/>
<dbReference type="UniLectin" id="C0HJX1"/>
<dbReference type="iPTMnet" id="C0HJX1"/>
<dbReference type="GO" id="GO:0005537">
    <property type="term" value="F:D-mannose binding"/>
    <property type="evidence" value="ECO:0007669"/>
    <property type="project" value="UniProtKB-KW"/>
</dbReference>
<dbReference type="GO" id="GO:0046872">
    <property type="term" value="F:metal ion binding"/>
    <property type="evidence" value="ECO:0007669"/>
    <property type="project" value="UniProtKB-KW"/>
</dbReference>
<dbReference type="GO" id="GO:0090729">
    <property type="term" value="F:toxin activity"/>
    <property type="evidence" value="ECO:0007669"/>
    <property type="project" value="UniProtKB-KW"/>
</dbReference>
<dbReference type="CDD" id="cd06899">
    <property type="entry name" value="lectin_legume_LecRK_Arcelin_ConA"/>
    <property type="match status" value="1"/>
</dbReference>
<dbReference type="FunFam" id="2.60.120.200:FF:000237">
    <property type="entry name" value="Mannose/glucose-specific lectin"/>
    <property type="match status" value="1"/>
</dbReference>
<dbReference type="Gene3D" id="2.60.120.200">
    <property type="match status" value="1"/>
</dbReference>
<dbReference type="InterPro" id="IPR013320">
    <property type="entry name" value="ConA-like_dom_sf"/>
</dbReference>
<dbReference type="InterPro" id="IPR016363">
    <property type="entry name" value="L-lectin"/>
</dbReference>
<dbReference type="InterPro" id="IPR000985">
    <property type="entry name" value="Lectin_LegA_CS"/>
</dbReference>
<dbReference type="InterPro" id="IPR019825">
    <property type="entry name" value="Lectin_legB_Mn/Ca_BS"/>
</dbReference>
<dbReference type="InterPro" id="IPR001220">
    <property type="entry name" value="Legume_lectin_dom"/>
</dbReference>
<dbReference type="InterPro" id="IPR050258">
    <property type="entry name" value="Leguminous_Lectin"/>
</dbReference>
<dbReference type="PANTHER" id="PTHR32401">
    <property type="entry name" value="CONCANAVALIN A-LIKE LECTIN FAMILY PROTEIN"/>
    <property type="match status" value="1"/>
</dbReference>
<dbReference type="PANTHER" id="PTHR32401:SF47">
    <property type="entry name" value="LEGUME LECTIN DOMAIN-CONTAINING PROTEIN"/>
    <property type="match status" value="1"/>
</dbReference>
<dbReference type="Pfam" id="PF00139">
    <property type="entry name" value="Lectin_legB"/>
    <property type="match status" value="1"/>
</dbReference>
<dbReference type="PIRSF" id="PIRSF002690">
    <property type="entry name" value="L-type_lectin_plant"/>
    <property type="match status" value="1"/>
</dbReference>
<dbReference type="SUPFAM" id="SSF49899">
    <property type="entry name" value="Concanavalin A-like lectins/glucanases"/>
    <property type="match status" value="1"/>
</dbReference>
<dbReference type="PROSITE" id="PS00308">
    <property type="entry name" value="LECTIN_LEGUME_ALPHA"/>
    <property type="match status" value="1"/>
</dbReference>
<dbReference type="PROSITE" id="PS00307">
    <property type="entry name" value="LECTIN_LEGUME_BETA"/>
    <property type="match status" value="1"/>
</dbReference>
<feature type="chain" id="PRO_0000436265" description="Mannose/glucose-specific lectin">
    <location>
        <begin position="1"/>
        <end position="245"/>
    </location>
</feature>
<feature type="binding site" evidence="1">
    <location>
        <position position="87"/>
    </location>
    <ligand>
        <name>a carbohydrate</name>
        <dbReference type="ChEBI" id="CHEBI:16646"/>
    </ligand>
</feature>
<feature type="binding site" evidence="1">
    <location>
        <position position="107"/>
    </location>
    <ligand>
        <name>a carbohydrate</name>
        <dbReference type="ChEBI" id="CHEBI:16646"/>
    </ligand>
</feature>
<feature type="binding site" evidence="1">
    <location>
        <position position="129"/>
    </location>
    <ligand>
        <name>Mn(2+)</name>
        <dbReference type="ChEBI" id="CHEBI:29035"/>
    </ligand>
</feature>
<feature type="binding site" evidence="1">
    <location>
        <position position="131"/>
    </location>
    <ligand>
        <name>Ca(2+)</name>
        <dbReference type="ChEBI" id="CHEBI:29108"/>
    </ligand>
</feature>
<feature type="binding site" evidence="1">
    <location>
        <position position="131"/>
    </location>
    <ligand>
        <name>Mn(2+)</name>
        <dbReference type="ChEBI" id="CHEBI:29035"/>
    </ligand>
</feature>
<feature type="binding site" evidence="1">
    <location>
        <position position="133"/>
    </location>
    <ligand>
        <name>Ca(2+)</name>
        <dbReference type="ChEBI" id="CHEBI:29108"/>
    </ligand>
</feature>
<feature type="binding site" evidence="1">
    <location>
        <position position="138"/>
    </location>
    <ligand>
        <name>a carbohydrate</name>
        <dbReference type="ChEBI" id="CHEBI:16646"/>
    </ligand>
</feature>
<feature type="binding site" evidence="1">
    <location>
        <position position="139"/>
    </location>
    <ligand>
        <name>a carbohydrate</name>
        <dbReference type="ChEBI" id="CHEBI:16646"/>
    </ligand>
</feature>
<feature type="binding site" evidence="1">
    <location>
        <position position="139"/>
    </location>
    <ligand>
        <name>Ca(2+)</name>
        <dbReference type="ChEBI" id="CHEBI:29108"/>
    </ligand>
</feature>
<feature type="binding site" evidence="1">
    <location>
        <position position="142"/>
    </location>
    <ligand>
        <name>Ca(2+)</name>
        <dbReference type="ChEBI" id="CHEBI:29108"/>
    </ligand>
</feature>
<feature type="binding site" evidence="1">
    <location>
        <position position="142"/>
    </location>
    <ligand>
        <name>Mn(2+)</name>
        <dbReference type="ChEBI" id="CHEBI:29035"/>
    </ligand>
</feature>
<feature type="binding site" evidence="1">
    <location>
        <position position="147"/>
    </location>
    <ligand>
        <name>Mn(2+)</name>
        <dbReference type="ChEBI" id="CHEBI:29035"/>
    </ligand>
</feature>
<feature type="binding site" evidence="1">
    <location>
        <position position="221"/>
    </location>
    <ligand>
        <name>a carbohydrate</name>
        <dbReference type="ChEBI" id="CHEBI:16646"/>
    </ligand>
</feature>
<feature type="binding site" evidence="1">
    <location>
        <position position="222"/>
    </location>
    <ligand>
        <name>a carbohydrate</name>
        <dbReference type="ChEBI" id="CHEBI:16646"/>
    </ligand>
</feature>
<feature type="binding site" evidence="1">
    <location>
        <position position="223"/>
    </location>
    <ligand>
        <name>a carbohydrate</name>
        <dbReference type="ChEBI" id="CHEBI:16646"/>
    </ligand>
</feature>
<feature type="glycosylation site" description="N-linked (GlcNAc...) asparagine" evidence="1">
    <location>
        <position position="119"/>
    </location>
</feature>
<feature type="strand" evidence="6">
    <location>
        <begin position="3"/>
        <end position="10"/>
    </location>
</feature>
<feature type="strand" evidence="6">
    <location>
        <begin position="16"/>
        <end position="22"/>
    </location>
</feature>
<feature type="strand" evidence="6">
    <location>
        <begin position="45"/>
        <end position="55"/>
    </location>
</feature>
<feature type="turn" evidence="6">
    <location>
        <begin position="62"/>
        <end position="65"/>
    </location>
</feature>
<feature type="strand" evidence="6">
    <location>
        <begin position="66"/>
        <end position="79"/>
    </location>
</feature>
<feature type="strand" evidence="6">
    <location>
        <begin position="81"/>
        <end position="84"/>
    </location>
</feature>
<feature type="strand" evidence="6">
    <location>
        <begin position="88"/>
        <end position="94"/>
    </location>
</feature>
<feature type="turn" evidence="6">
    <location>
        <begin position="107"/>
        <end position="111"/>
    </location>
</feature>
<feature type="helix" evidence="6">
    <location>
        <begin position="114"/>
        <end position="116"/>
    </location>
</feature>
<feature type="turn" evidence="6">
    <location>
        <begin position="120"/>
        <end position="122"/>
    </location>
</feature>
<feature type="strand" evidence="6">
    <location>
        <begin position="126"/>
        <end position="131"/>
    </location>
</feature>
<feature type="turn" evidence="6">
    <location>
        <begin position="136"/>
        <end position="138"/>
    </location>
</feature>
<feature type="strand" evidence="6">
    <location>
        <begin position="147"/>
        <end position="156"/>
    </location>
</feature>
<feature type="strand" evidence="6">
    <location>
        <begin position="158"/>
        <end position="162"/>
    </location>
</feature>
<feature type="strand" evidence="6">
    <location>
        <begin position="171"/>
        <end position="178"/>
    </location>
</feature>
<feature type="turn" evidence="6">
    <location>
        <begin position="179"/>
        <end position="182"/>
    </location>
</feature>
<feature type="strand" evidence="6">
    <location>
        <begin position="183"/>
        <end position="189"/>
    </location>
</feature>
<feature type="strand" evidence="6">
    <location>
        <begin position="195"/>
        <end position="201"/>
    </location>
</feature>
<feature type="helix" evidence="6">
    <location>
        <begin position="204"/>
        <end position="206"/>
    </location>
</feature>
<feature type="strand" evidence="6">
    <location>
        <begin position="210"/>
        <end position="223"/>
    </location>
</feature>
<feature type="strand" evidence="6">
    <location>
        <begin position="226"/>
        <end position="239"/>
    </location>
</feature>
<reference evidence="5" key="1">
    <citation type="journal article" date="2016" name="Arch. Biochem. Biophys.">
        <title>Structural analysis of Centrolobium tomentosum seed lectin with inflammatory activity.</title>
        <authorList>
            <person name="Almeida A.C."/>
            <person name="Osterne V.J."/>
            <person name="Santiago M.Q."/>
            <person name="Pinto-Junior V.R."/>
            <person name="Silva-Filho J.C."/>
            <person name="Lossio C.F."/>
            <person name="Faustino Nascimento F.L."/>
            <person name="Honorato Almeida R.P."/>
            <person name="Teixeira C.S."/>
            <person name="Leal R.B."/>
            <person name="Delatorre P."/>
            <person name="Matias Rocha B.A."/>
            <person name="Sampaio Assreuy A.M."/>
            <person name="Nascimento K.S."/>
            <person name="Cavada B.S."/>
        </authorList>
    </citation>
    <scope>PROTEIN SEQUENCE</scope>
    <scope>X-RAY CRYSTALLOGRAPHY (1.9 ANGSTROMS) OF 1-245 IN COMPLEX WITH METHYL-DIMANNOSIDE; CALCIUM AND MANGANESE</scope>
    <scope>FUNCTION</scope>
    <scope>SUBUNIT</scope>
    <scope>DIMERIZATION</scope>
    <scope>GLYCOSYLATION AT ASN-119</scope>
    <scope>IDENTIFICATION BY MASS SPECTROMETRY</scope>
    <source>
        <tissue evidence="3">Seed</tissue>
    </source>
</reference>
<reference evidence="5" key="2">
    <citation type="journal article" date="2014" name="Int. J. Ind. Med. Plants">
        <title>Purification and partial characterization of a new mannose/glucose-specific lectin from Centrolobium tomentosum Guill. ex Benth seeds exhibiting low toxicity on Artemia sp.</title>
        <authorList>
            <person name="Almeida A.C."/>
            <person name="Silva H.C."/>
            <person name="Pereira-Junior F.N."/>
            <person name="Cajazeiras J.B."/>
            <person name="Delatorre P."/>
            <person name="Nagano C.S."/>
            <person name="Nascimento K.S."/>
            <person name="Cavada B.S."/>
        </authorList>
    </citation>
    <scope>PROTEIN SEQUENCE OF 26-45; 137-163; 183-196 AND 214-232</scope>
    <scope>FUNCTION</scope>
    <scope>BIOPHYSICOCHEMICAL PROPERTIES</scope>
    <scope>MASS SPECTROMETRY</scope>
    <scope>IDENTIFICATION BY MASS SPECTROMETRY</scope>
    <scope>TOXIC DOSE</scope>
    <source>
        <tissue evidence="4">Seed</tissue>
    </source>
</reference>
<organism evidence="4">
    <name type="scientific">Centrolobium tomentosum</name>
    <name type="common">Arariba</name>
    <dbReference type="NCBI Taxonomy" id="500182"/>
    <lineage>
        <taxon>Eukaryota</taxon>
        <taxon>Viridiplantae</taxon>
        <taxon>Streptophyta</taxon>
        <taxon>Embryophyta</taxon>
        <taxon>Tracheophyta</taxon>
        <taxon>Spermatophyta</taxon>
        <taxon>Magnoliopsida</taxon>
        <taxon>eudicotyledons</taxon>
        <taxon>Gunneridae</taxon>
        <taxon>Pentapetalae</taxon>
        <taxon>rosids</taxon>
        <taxon>fabids</taxon>
        <taxon>Fabales</taxon>
        <taxon>Fabaceae</taxon>
        <taxon>Papilionoideae</taxon>
        <taxon>50 kb inversion clade</taxon>
        <taxon>dalbergioids sensu lato</taxon>
        <taxon>Dalbergieae</taxon>
        <taxon>Pterocarpus clade</taxon>
        <taxon>Centrolobium</taxon>
    </lineage>
</organism>
<accession>C0HJX1</accession>
<name>LECC1_CENTO</name>
<proteinExistence type="evidence at protein level"/>